<name>MTNK_BACCQ</name>
<organism>
    <name type="scientific">Bacillus cereus (strain Q1)</name>
    <dbReference type="NCBI Taxonomy" id="361100"/>
    <lineage>
        <taxon>Bacteria</taxon>
        <taxon>Bacillati</taxon>
        <taxon>Bacillota</taxon>
        <taxon>Bacilli</taxon>
        <taxon>Bacillales</taxon>
        <taxon>Bacillaceae</taxon>
        <taxon>Bacillus</taxon>
        <taxon>Bacillus cereus group</taxon>
    </lineage>
</organism>
<accession>B9IWP6</accession>
<feature type="chain" id="PRO_1000187403" description="Methylthioribose kinase">
    <location>
        <begin position="1"/>
        <end position="393"/>
    </location>
</feature>
<feature type="binding site" evidence="1">
    <location>
        <position position="38"/>
    </location>
    <ligand>
        <name>ATP</name>
        <dbReference type="ChEBI" id="CHEBI:30616"/>
    </ligand>
</feature>
<feature type="binding site" evidence="1">
    <location>
        <position position="53"/>
    </location>
    <ligand>
        <name>ATP</name>
        <dbReference type="ChEBI" id="CHEBI:30616"/>
    </ligand>
</feature>
<feature type="binding site" evidence="1">
    <location>
        <begin position="107"/>
        <end position="109"/>
    </location>
    <ligand>
        <name>ATP</name>
        <dbReference type="ChEBI" id="CHEBI:30616"/>
    </ligand>
</feature>
<feature type="binding site" evidence="1">
    <location>
        <position position="225"/>
    </location>
    <ligand>
        <name>substrate</name>
    </ligand>
</feature>
<feature type="binding site" evidence="1">
    <location>
        <begin position="242"/>
        <end position="244"/>
    </location>
    <ligand>
        <name>ATP</name>
        <dbReference type="ChEBI" id="CHEBI:30616"/>
    </ligand>
</feature>
<feature type="binding site" evidence="1">
    <location>
        <position position="332"/>
    </location>
    <ligand>
        <name>substrate</name>
    </ligand>
</feature>
<keyword id="KW-0028">Amino-acid biosynthesis</keyword>
<keyword id="KW-0067">ATP-binding</keyword>
<keyword id="KW-0418">Kinase</keyword>
<keyword id="KW-0486">Methionine biosynthesis</keyword>
<keyword id="KW-0547">Nucleotide-binding</keyword>
<keyword id="KW-0808">Transferase</keyword>
<gene>
    <name evidence="1" type="primary">mtnK</name>
    <name type="ordered locus">BCQ_3823</name>
</gene>
<proteinExistence type="inferred from homology"/>
<comment type="function">
    <text evidence="1">Catalyzes the phosphorylation of methylthioribose into methylthioribose-1-phosphate.</text>
</comment>
<comment type="catalytic activity">
    <reaction evidence="1">
        <text>5-(methylsulfanyl)-D-ribose + ATP = 5-(methylsulfanyl)-alpha-D-ribose 1-phosphate + ADP + H(+)</text>
        <dbReference type="Rhea" id="RHEA:22312"/>
        <dbReference type="ChEBI" id="CHEBI:15378"/>
        <dbReference type="ChEBI" id="CHEBI:30616"/>
        <dbReference type="ChEBI" id="CHEBI:58533"/>
        <dbReference type="ChEBI" id="CHEBI:78440"/>
        <dbReference type="ChEBI" id="CHEBI:456216"/>
        <dbReference type="EC" id="2.7.1.100"/>
    </reaction>
</comment>
<comment type="pathway">
    <text evidence="1">Amino-acid biosynthesis; L-methionine biosynthesis via salvage pathway; S-methyl-5-thio-alpha-D-ribose 1-phosphate from S-methyl-5'-thioadenosine (hydrolase route): step 2/2.</text>
</comment>
<comment type="subunit">
    <text evidence="1">Homodimer.</text>
</comment>
<comment type="similarity">
    <text evidence="1">Belongs to the methylthioribose kinase family.</text>
</comment>
<evidence type="ECO:0000255" key="1">
    <source>
        <dbReference type="HAMAP-Rule" id="MF_01683"/>
    </source>
</evidence>
<sequence length="393" mass="44709">MGYYSLTEVTAVQYAKEHGYFEKKANVVCHEIGDGNLNYVFKLDDGEKSIIIKQALPYAKVVGESWPLSIKRATIESKALQIFAKYVPEYVPVVYSHDEELAVTIIEDLSKLTITRKGLIDGEEYPLLSQHIGRFLANVLFYTSDFGLQSEEKRVLEGTFVNPDLCKITEDLVFTDPFGHYDTNDYESELQLAVDELWSDKTLKLKVAQYKYKFLTRKEALIHGDLHTGSIFSSPSETKVIDPEFATYGPFGFDIGQFIANLLLNALSREEEQRSVLFFHIEKTWSYFVDTFTKLWIGEGVEAYTKEKQWLPIILQNIFTDVVGFAGCELIRRTIGLAHVADLDEIANKETRIQAKKQALSLGRELIKYESKNADIQLFRALFQQTVSGGVKA</sequence>
<protein>
    <recommendedName>
        <fullName evidence="1">Methylthioribose kinase</fullName>
        <shortName evidence="1">MTR kinase</shortName>
        <ecNumber evidence="1">2.7.1.100</ecNumber>
    </recommendedName>
</protein>
<dbReference type="EC" id="2.7.1.100" evidence="1"/>
<dbReference type="EMBL" id="CP000227">
    <property type="protein sequence ID" value="ACM14251.1"/>
    <property type="molecule type" value="Genomic_DNA"/>
</dbReference>
<dbReference type="SMR" id="B9IWP6"/>
<dbReference type="KEGG" id="bcq:BCQ_3823"/>
<dbReference type="HOGENOM" id="CLU_033681_0_0_9"/>
<dbReference type="UniPathway" id="UPA00904">
    <property type="reaction ID" value="UER00872"/>
</dbReference>
<dbReference type="Proteomes" id="UP000000441">
    <property type="component" value="Chromosome"/>
</dbReference>
<dbReference type="GO" id="GO:0005524">
    <property type="term" value="F:ATP binding"/>
    <property type="evidence" value="ECO:0007669"/>
    <property type="project" value="UniProtKB-UniRule"/>
</dbReference>
<dbReference type="GO" id="GO:0046522">
    <property type="term" value="F:S-methyl-5-thioribose kinase activity"/>
    <property type="evidence" value="ECO:0007669"/>
    <property type="project" value="UniProtKB-UniRule"/>
</dbReference>
<dbReference type="GO" id="GO:0019509">
    <property type="term" value="P:L-methionine salvage from methylthioadenosine"/>
    <property type="evidence" value="ECO:0007669"/>
    <property type="project" value="UniProtKB-UniRule"/>
</dbReference>
<dbReference type="FunFam" id="3.30.200.20:FF:000436">
    <property type="entry name" value="Methylthioribose kinase"/>
    <property type="match status" value="1"/>
</dbReference>
<dbReference type="FunFam" id="3.90.1200.10:FF:000008">
    <property type="entry name" value="Methylthioribose kinase"/>
    <property type="match status" value="1"/>
</dbReference>
<dbReference type="Gene3D" id="3.90.1200.10">
    <property type="match status" value="1"/>
</dbReference>
<dbReference type="Gene3D" id="3.30.200.20">
    <property type="entry name" value="Phosphorylase Kinase, domain 1"/>
    <property type="match status" value="1"/>
</dbReference>
<dbReference type="HAMAP" id="MF_01683">
    <property type="entry name" value="Salvage_MtnK"/>
    <property type="match status" value="1"/>
</dbReference>
<dbReference type="InterPro" id="IPR002575">
    <property type="entry name" value="Aminoglycoside_PTrfase"/>
</dbReference>
<dbReference type="InterPro" id="IPR011009">
    <property type="entry name" value="Kinase-like_dom_sf"/>
</dbReference>
<dbReference type="InterPro" id="IPR009212">
    <property type="entry name" value="Methylthioribose_kinase"/>
</dbReference>
<dbReference type="NCBIfam" id="TIGR01767">
    <property type="entry name" value="MTRK"/>
    <property type="match status" value="1"/>
</dbReference>
<dbReference type="PANTHER" id="PTHR34273">
    <property type="entry name" value="METHYLTHIORIBOSE KINASE"/>
    <property type="match status" value="1"/>
</dbReference>
<dbReference type="PANTHER" id="PTHR34273:SF2">
    <property type="entry name" value="METHYLTHIORIBOSE KINASE"/>
    <property type="match status" value="1"/>
</dbReference>
<dbReference type="Pfam" id="PF01636">
    <property type="entry name" value="APH"/>
    <property type="match status" value="1"/>
</dbReference>
<dbReference type="PIRSF" id="PIRSF031134">
    <property type="entry name" value="MTRK"/>
    <property type="match status" value="1"/>
</dbReference>
<dbReference type="SUPFAM" id="SSF56112">
    <property type="entry name" value="Protein kinase-like (PK-like)"/>
    <property type="match status" value="1"/>
</dbReference>
<reference key="1">
    <citation type="journal article" date="2009" name="J. Bacteriol.">
        <title>Complete genome sequence of the extremophilic Bacillus cereus strain Q1 with industrial applications.</title>
        <authorList>
            <person name="Xiong Z."/>
            <person name="Jiang Y."/>
            <person name="Qi D."/>
            <person name="Lu H."/>
            <person name="Yang F."/>
            <person name="Yang J."/>
            <person name="Chen L."/>
            <person name="Sun L."/>
            <person name="Xu X."/>
            <person name="Xue Y."/>
            <person name="Zhu Y."/>
            <person name="Jin Q."/>
        </authorList>
    </citation>
    <scope>NUCLEOTIDE SEQUENCE [LARGE SCALE GENOMIC DNA]</scope>
    <source>
        <strain>Q1</strain>
    </source>
</reference>